<gene>
    <name type="ORF">CBG10032</name>
</gene>
<evidence type="ECO:0000250" key="1">
    <source>
        <dbReference type="UniProtKB" id="P34440"/>
    </source>
</evidence>
<evidence type="ECO:0000250" key="2">
    <source>
        <dbReference type="UniProtKB" id="P49450"/>
    </source>
</evidence>
<evidence type="ECO:0000255" key="3"/>
<evidence type="ECO:0000256" key="4">
    <source>
        <dbReference type="SAM" id="MobiDB-lite"/>
    </source>
</evidence>
<evidence type="ECO:0000312" key="5">
    <source>
        <dbReference type="EMBL" id="CAP29548.1"/>
    </source>
</evidence>
<feature type="chain" id="PRO_0000368210" description="Histone H3-like centromeric protein cpar-1">
    <location>
        <begin position="1"/>
        <end position="345"/>
    </location>
</feature>
<feature type="region of interest" description="Disordered" evidence="4">
    <location>
        <begin position="117"/>
        <end position="246"/>
    </location>
</feature>
<feature type="region of interest" description="H3-like" evidence="3">
    <location>
        <begin position="263"/>
        <end position="340"/>
    </location>
</feature>
<feature type="compositionally biased region" description="Basic and acidic residues" evidence="4">
    <location>
        <begin position="122"/>
        <end position="149"/>
    </location>
</feature>
<feature type="compositionally biased region" description="Basic residues" evidence="4">
    <location>
        <begin position="233"/>
        <end position="246"/>
    </location>
</feature>
<feature type="site" description="Cleavage; by sep-1" evidence="1">
    <location>
        <begin position="128"/>
        <end position="129"/>
    </location>
</feature>
<dbReference type="EMBL" id="HE601459">
    <property type="protein sequence ID" value="CAP29548.1"/>
    <property type="molecule type" value="Genomic_DNA"/>
</dbReference>
<dbReference type="SMR" id="A8XA80"/>
<dbReference type="FunCoup" id="A8XA80">
    <property type="interactions" value="108"/>
</dbReference>
<dbReference type="STRING" id="6238.A8XA80"/>
<dbReference type="KEGG" id="cbr:CBG_10032"/>
<dbReference type="CTD" id="8583693"/>
<dbReference type="WormBase" id="CBG10032">
    <property type="protein sequence ID" value="CBP39652"/>
    <property type="gene ID" value="WBGene00031517"/>
</dbReference>
<dbReference type="eggNOG" id="KOG1745">
    <property type="taxonomic scope" value="Eukaryota"/>
</dbReference>
<dbReference type="HOGENOM" id="CLU_071908_0_0_1"/>
<dbReference type="InParanoid" id="A8XA80"/>
<dbReference type="OMA" id="NIDITHR"/>
<dbReference type="OrthoDB" id="5858439at2759"/>
<dbReference type="Proteomes" id="UP000008549">
    <property type="component" value="Unassembled WGS sequence"/>
</dbReference>
<dbReference type="GO" id="GO:0000786">
    <property type="term" value="C:nucleosome"/>
    <property type="evidence" value="ECO:0007669"/>
    <property type="project" value="UniProtKB-KW"/>
</dbReference>
<dbReference type="GO" id="GO:0005634">
    <property type="term" value="C:nucleus"/>
    <property type="evidence" value="ECO:0000318"/>
    <property type="project" value="GO_Central"/>
</dbReference>
<dbReference type="GO" id="GO:0003677">
    <property type="term" value="F:DNA binding"/>
    <property type="evidence" value="ECO:0007669"/>
    <property type="project" value="UniProtKB-KW"/>
</dbReference>
<dbReference type="GO" id="GO:0046982">
    <property type="term" value="F:protein heterodimerization activity"/>
    <property type="evidence" value="ECO:0007669"/>
    <property type="project" value="InterPro"/>
</dbReference>
<dbReference type="GO" id="GO:0030527">
    <property type="term" value="F:structural constituent of chromatin"/>
    <property type="evidence" value="ECO:0007669"/>
    <property type="project" value="InterPro"/>
</dbReference>
<dbReference type="CDD" id="cd22911">
    <property type="entry name" value="HFD_H3"/>
    <property type="match status" value="1"/>
</dbReference>
<dbReference type="FunFam" id="1.10.20.10:FF:000102">
    <property type="entry name" value="Histone H3-like centromeric protein CSE4"/>
    <property type="match status" value="1"/>
</dbReference>
<dbReference type="Gene3D" id="1.10.20.10">
    <property type="entry name" value="Histone, subunit A"/>
    <property type="match status" value="1"/>
</dbReference>
<dbReference type="InterPro" id="IPR009072">
    <property type="entry name" value="Histone-fold"/>
</dbReference>
<dbReference type="InterPro" id="IPR007125">
    <property type="entry name" value="Histone_H2A/H2B/H3"/>
</dbReference>
<dbReference type="InterPro" id="IPR000164">
    <property type="entry name" value="Histone_H3/CENP-A"/>
</dbReference>
<dbReference type="PANTHER" id="PTHR45810:SF17">
    <property type="entry name" value="HISTONE H3-LIKE CENTROMERIC PROTEIN A"/>
    <property type="match status" value="1"/>
</dbReference>
<dbReference type="PANTHER" id="PTHR45810">
    <property type="entry name" value="HISTONE H3.2"/>
    <property type="match status" value="1"/>
</dbReference>
<dbReference type="Pfam" id="PF00125">
    <property type="entry name" value="Histone"/>
    <property type="match status" value="1"/>
</dbReference>
<dbReference type="PRINTS" id="PR00622">
    <property type="entry name" value="HISTONEH3"/>
</dbReference>
<dbReference type="SMART" id="SM00428">
    <property type="entry name" value="H3"/>
    <property type="match status" value="1"/>
</dbReference>
<dbReference type="SUPFAM" id="SSF47113">
    <property type="entry name" value="Histone-fold"/>
    <property type="match status" value="1"/>
</dbReference>
<accession>A8XA80</accession>
<reference evidence="5" key="1">
    <citation type="journal article" date="2003" name="PLoS Biol.">
        <title>The genome sequence of Caenorhabditis briggsae: a platform for comparative genomics.</title>
        <authorList>
            <person name="Stein L.D."/>
            <person name="Bao Z."/>
            <person name="Blasiar D."/>
            <person name="Blumenthal T."/>
            <person name="Brent M.R."/>
            <person name="Chen N."/>
            <person name="Chinwalla A."/>
            <person name="Clarke L."/>
            <person name="Clee C."/>
            <person name="Coghlan A."/>
            <person name="Coulson A."/>
            <person name="D'Eustachio P."/>
            <person name="Fitch D.H.A."/>
            <person name="Fulton L.A."/>
            <person name="Fulton R.E."/>
            <person name="Griffiths-Jones S."/>
            <person name="Harris T.W."/>
            <person name="Hillier L.W."/>
            <person name="Kamath R."/>
            <person name="Kuwabara P.E."/>
            <person name="Mardis E.R."/>
            <person name="Marra M.A."/>
            <person name="Miner T.L."/>
            <person name="Minx P."/>
            <person name="Mullikin J.C."/>
            <person name="Plumb R.W."/>
            <person name="Rogers J."/>
            <person name="Schein J.E."/>
            <person name="Sohrmann M."/>
            <person name="Spieth J."/>
            <person name="Stajich J.E."/>
            <person name="Wei C."/>
            <person name="Willey D."/>
            <person name="Wilson R.K."/>
            <person name="Durbin R.M."/>
            <person name="Waterston R.H."/>
        </authorList>
    </citation>
    <scope>NUCLEOTIDE SEQUENCE [LARGE SCALE GENOMIC DNA]</scope>
    <source>
        <strain evidence="5">AF16</strain>
    </source>
</reference>
<sequence length="345" mass="41344">MYHHDSGPHIEEVFDPPSRRTMMQEIETHPDVIAFGKKLRKIKNQPESTFLSSADRMEEIIDAFRDQIAKWEEEEELNEPCEYRQLKIEIFTQKKIEYQRKNNLAVDEFYKKRNLKNHSNRKPLEESRRREEPRDRVHESNIDITHRGDSTSLNHYSRHHYSQRQSQSSRFERERESDEEEENSQPIQRYRSRSPKPSYSYNQSTMQQSQRDDTNVYHRSHQSTSQPPQVRMRSGKSRVTKTHNRKFRPGQKALAEIRKYQKSTDMLIQKAPFVRLVHEIIREQTYKSQDYRIRADALMALQEAAEAFMVEMFEGSVLICNHAKRVTLMPTDIQLYRRLCLRNLS</sequence>
<proteinExistence type="inferred from homology"/>
<name>HCP3L_CAEBR</name>
<keyword id="KW-0158">Chromosome</keyword>
<keyword id="KW-0238">DNA-binding</keyword>
<keyword id="KW-0544">Nucleosome core</keyword>
<keyword id="KW-0539">Nucleus</keyword>
<keyword id="KW-1185">Reference proteome</keyword>
<organism>
    <name type="scientific">Caenorhabditis briggsae</name>
    <dbReference type="NCBI Taxonomy" id="6238"/>
    <lineage>
        <taxon>Eukaryota</taxon>
        <taxon>Metazoa</taxon>
        <taxon>Ecdysozoa</taxon>
        <taxon>Nematoda</taxon>
        <taxon>Chromadorea</taxon>
        <taxon>Rhabditida</taxon>
        <taxon>Rhabditina</taxon>
        <taxon>Rhabditomorpha</taxon>
        <taxon>Rhabditoidea</taxon>
        <taxon>Rhabditidae</taxon>
        <taxon>Peloderinae</taxon>
        <taxon>Caenorhabditis</taxon>
    </lineage>
</organism>
<protein>
    <recommendedName>
        <fullName>Histone H3-like centromeric protein cpar-1</fullName>
    </recommendedName>
    <alternativeName>
        <fullName>CENP-A-related protein 1</fullName>
    </alternativeName>
    <alternativeName>
        <fullName evidence="1">Centromeric protein A related</fullName>
    </alternativeName>
</protein>
<comment type="function">
    <text evidence="1">Histone H3-like variant which exclusively replaces conventional H3 in the nucleosome core of centromeric chromatin at the inner plate of the kinetochore. Required for recruitment and assembly of kinetochore proteins, mitotic progression and chromosome segregation. May serve as an epigenetic mark that propagates centromere identity through replication and cell division. Not required for chromosome segregation during meiosis.</text>
</comment>
<comment type="subunit">
    <text evidence="2">Forms a nucleosome-like histone octamer containing two molecules each of H2A, H2B, cpar-1 and H4 assembled in one cpar-1-H4 heterotetramer and two H2A-H2B heterodimers.</text>
</comment>
<comment type="subcellular location">
    <subcellularLocation>
        <location evidence="1">Nucleus</location>
    </subcellularLocation>
    <subcellularLocation>
        <location evidence="1">Chromosome</location>
    </subcellularLocation>
    <text evidence="1">Localizes to chromosomes during meiotic prometaphase I and metaphase I. Upon cleavage at the onset of anaphase I, the C-terminus remains localized to chromosomes. The cleaved form transiently associates with chromosome but not centromeres during embryonic mitosis.</text>
</comment>
<comment type="PTM">
    <text evidence="1">Cleaved at the onset of meiotic anaphase I, likely by separase sep-1.</text>
</comment>
<comment type="similarity">
    <text evidence="3">Belongs to the histone H3 family.</text>
</comment>